<evidence type="ECO:0000255" key="1">
    <source>
        <dbReference type="HAMAP-Rule" id="MF_01025"/>
    </source>
</evidence>
<name>LEU1_LISW6</name>
<feature type="chain" id="PRO_1000149217" description="2-isopropylmalate synthase">
    <location>
        <begin position="1"/>
        <end position="512"/>
    </location>
</feature>
<feature type="domain" description="Pyruvate carboxyltransferase" evidence="1">
    <location>
        <begin position="4"/>
        <end position="266"/>
    </location>
</feature>
<feature type="region of interest" description="Regulatory domain" evidence="1">
    <location>
        <begin position="390"/>
        <end position="512"/>
    </location>
</feature>
<feature type="binding site" evidence="1">
    <location>
        <position position="13"/>
    </location>
    <ligand>
        <name>Mn(2+)</name>
        <dbReference type="ChEBI" id="CHEBI:29035"/>
    </ligand>
</feature>
<feature type="binding site" evidence="1">
    <location>
        <position position="201"/>
    </location>
    <ligand>
        <name>Mn(2+)</name>
        <dbReference type="ChEBI" id="CHEBI:29035"/>
    </ligand>
</feature>
<feature type="binding site" evidence="1">
    <location>
        <position position="203"/>
    </location>
    <ligand>
        <name>Mn(2+)</name>
        <dbReference type="ChEBI" id="CHEBI:29035"/>
    </ligand>
</feature>
<feature type="binding site" evidence="1">
    <location>
        <position position="237"/>
    </location>
    <ligand>
        <name>Mn(2+)</name>
        <dbReference type="ChEBI" id="CHEBI:29035"/>
    </ligand>
</feature>
<accession>A0AK92</accession>
<keyword id="KW-0028">Amino-acid biosynthesis</keyword>
<keyword id="KW-0100">Branched-chain amino acid biosynthesis</keyword>
<keyword id="KW-0963">Cytoplasm</keyword>
<keyword id="KW-0432">Leucine biosynthesis</keyword>
<keyword id="KW-0464">Manganese</keyword>
<keyword id="KW-0479">Metal-binding</keyword>
<keyword id="KW-0808">Transferase</keyword>
<reference key="1">
    <citation type="journal article" date="2006" name="J. Bacteriol.">
        <title>Whole-genome sequence of Listeria welshimeri reveals common steps in genome reduction with Listeria innocua as compared to Listeria monocytogenes.</title>
        <authorList>
            <person name="Hain T."/>
            <person name="Steinweg C."/>
            <person name="Kuenne C.T."/>
            <person name="Billion A."/>
            <person name="Ghai R."/>
            <person name="Chatterjee S.S."/>
            <person name="Domann E."/>
            <person name="Kaerst U."/>
            <person name="Goesmann A."/>
            <person name="Bekel T."/>
            <person name="Bartels D."/>
            <person name="Kaiser O."/>
            <person name="Meyer F."/>
            <person name="Puehler A."/>
            <person name="Weisshaar B."/>
            <person name="Wehland J."/>
            <person name="Liang C."/>
            <person name="Dandekar T."/>
            <person name="Lampidis R."/>
            <person name="Kreft J."/>
            <person name="Goebel W."/>
            <person name="Chakraborty T."/>
        </authorList>
    </citation>
    <scope>NUCLEOTIDE SEQUENCE [LARGE SCALE GENOMIC DNA]</scope>
    <source>
        <strain>ATCC 35897 / DSM 20650 / CCUG 15529 / CIP 8149 / NCTC 11857 / SLCC 5334 / V8</strain>
    </source>
</reference>
<protein>
    <recommendedName>
        <fullName evidence="1">2-isopropylmalate synthase</fullName>
        <ecNumber evidence="1">2.3.3.13</ecNumber>
    </recommendedName>
    <alternativeName>
        <fullName evidence="1">Alpha-IPM synthase</fullName>
    </alternativeName>
    <alternativeName>
        <fullName evidence="1">Alpha-isopropylmalate synthase</fullName>
    </alternativeName>
</protein>
<comment type="function">
    <text evidence="1">Catalyzes the condensation of the acetyl group of acetyl-CoA with 3-methyl-2-oxobutanoate (2-ketoisovalerate) to form 3-carboxy-3-hydroxy-4-methylpentanoate (2-isopropylmalate).</text>
</comment>
<comment type="catalytic activity">
    <reaction evidence="1">
        <text>3-methyl-2-oxobutanoate + acetyl-CoA + H2O = (2S)-2-isopropylmalate + CoA + H(+)</text>
        <dbReference type="Rhea" id="RHEA:21524"/>
        <dbReference type="ChEBI" id="CHEBI:1178"/>
        <dbReference type="ChEBI" id="CHEBI:11851"/>
        <dbReference type="ChEBI" id="CHEBI:15377"/>
        <dbReference type="ChEBI" id="CHEBI:15378"/>
        <dbReference type="ChEBI" id="CHEBI:57287"/>
        <dbReference type="ChEBI" id="CHEBI:57288"/>
        <dbReference type="EC" id="2.3.3.13"/>
    </reaction>
</comment>
<comment type="cofactor">
    <cofactor evidence="1">
        <name>Mn(2+)</name>
        <dbReference type="ChEBI" id="CHEBI:29035"/>
    </cofactor>
</comment>
<comment type="pathway">
    <text evidence="1">Amino-acid biosynthesis; L-leucine biosynthesis; L-leucine from 3-methyl-2-oxobutanoate: step 1/4.</text>
</comment>
<comment type="subunit">
    <text evidence="1">Homodimer.</text>
</comment>
<comment type="subcellular location">
    <subcellularLocation>
        <location evidence="1">Cytoplasm</location>
    </subcellularLocation>
</comment>
<comment type="similarity">
    <text evidence="1">Belongs to the alpha-IPM synthase/homocitrate synthase family. LeuA type 1 subfamily.</text>
</comment>
<dbReference type="EC" id="2.3.3.13" evidence="1"/>
<dbReference type="EMBL" id="AM263198">
    <property type="protein sequence ID" value="CAK21424.1"/>
    <property type="molecule type" value="Genomic_DNA"/>
</dbReference>
<dbReference type="RefSeq" id="WP_011702771.1">
    <property type="nucleotide sequence ID" value="NC_008555.1"/>
</dbReference>
<dbReference type="SMR" id="A0AK92"/>
<dbReference type="STRING" id="386043.lwe2006"/>
<dbReference type="GeneID" id="61189906"/>
<dbReference type="KEGG" id="lwe:lwe2006"/>
<dbReference type="eggNOG" id="COG0119">
    <property type="taxonomic scope" value="Bacteria"/>
</dbReference>
<dbReference type="HOGENOM" id="CLU_022158_0_1_9"/>
<dbReference type="OrthoDB" id="9804858at2"/>
<dbReference type="UniPathway" id="UPA00048">
    <property type="reaction ID" value="UER00070"/>
</dbReference>
<dbReference type="Proteomes" id="UP000000779">
    <property type="component" value="Chromosome"/>
</dbReference>
<dbReference type="GO" id="GO:0005737">
    <property type="term" value="C:cytoplasm"/>
    <property type="evidence" value="ECO:0007669"/>
    <property type="project" value="UniProtKB-SubCell"/>
</dbReference>
<dbReference type="GO" id="GO:0003852">
    <property type="term" value="F:2-isopropylmalate synthase activity"/>
    <property type="evidence" value="ECO:0007669"/>
    <property type="project" value="UniProtKB-UniRule"/>
</dbReference>
<dbReference type="GO" id="GO:0003985">
    <property type="term" value="F:acetyl-CoA C-acetyltransferase activity"/>
    <property type="evidence" value="ECO:0007669"/>
    <property type="project" value="UniProtKB-UniRule"/>
</dbReference>
<dbReference type="GO" id="GO:0030145">
    <property type="term" value="F:manganese ion binding"/>
    <property type="evidence" value="ECO:0007669"/>
    <property type="project" value="UniProtKB-UniRule"/>
</dbReference>
<dbReference type="GO" id="GO:0009098">
    <property type="term" value="P:L-leucine biosynthetic process"/>
    <property type="evidence" value="ECO:0007669"/>
    <property type="project" value="UniProtKB-UniRule"/>
</dbReference>
<dbReference type="CDD" id="cd07940">
    <property type="entry name" value="DRE_TIM_IPMS"/>
    <property type="match status" value="1"/>
</dbReference>
<dbReference type="FunFam" id="1.10.238.260:FF:000001">
    <property type="entry name" value="2-isopropylmalate synthase"/>
    <property type="match status" value="1"/>
</dbReference>
<dbReference type="FunFam" id="3.20.20.70:FF:000010">
    <property type="entry name" value="2-isopropylmalate synthase"/>
    <property type="match status" value="1"/>
</dbReference>
<dbReference type="FunFam" id="3.30.160.270:FF:000003">
    <property type="entry name" value="2-isopropylmalate synthase"/>
    <property type="match status" value="1"/>
</dbReference>
<dbReference type="Gene3D" id="1.10.238.260">
    <property type="match status" value="1"/>
</dbReference>
<dbReference type="Gene3D" id="3.30.160.270">
    <property type="match status" value="1"/>
</dbReference>
<dbReference type="Gene3D" id="3.20.20.70">
    <property type="entry name" value="Aldolase class I"/>
    <property type="match status" value="1"/>
</dbReference>
<dbReference type="HAMAP" id="MF_01025">
    <property type="entry name" value="LeuA_type1"/>
    <property type="match status" value="1"/>
</dbReference>
<dbReference type="InterPro" id="IPR050073">
    <property type="entry name" value="2-IPM_HCS-like"/>
</dbReference>
<dbReference type="InterPro" id="IPR013709">
    <property type="entry name" value="2-isopropylmalate_synth_dimer"/>
</dbReference>
<dbReference type="InterPro" id="IPR002034">
    <property type="entry name" value="AIPM/Hcit_synth_CS"/>
</dbReference>
<dbReference type="InterPro" id="IPR013785">
    <property type="entry name" value="Aldolase_TIM"/>
</dbReference>
<dbReference type="InterPro" id="IPR054691">
    <property type="entry name" value="LeuA/HCS_post-cat"/>
</dbReference>
<dbReference type="InterPro" id="IPR036230">
    <property type="entry name" value="LeuA_allosteric_dom_sf"/>
</dbReference>
<dbReference type="InterPro" id="IPR005671">
    <property type="entry name" value="LeuA_bact_synth"/>
</dbReference>
<dbReference type="InterPro" id="IPR000891">
    <property type="entry name" value="PYR_CT"/>
</dbReference>
<dbReference type="NCBIfam" id="TIGR00973">
    <property type="entry name" value="leuA_bact"/>
    <property type="match status" value="1"/>
</dbReference>
<dbReference type="NCBIfam" id="NF002086">
    <property type="entry name" value="PRK00915.1-3"/>
    <property type="match status" value="1"/>
</dbReference>
<dbReference type="NCBIfam" id="NF002088">
    <property type="entry name" value="PRK00915.1-5"/>
    <property type="match status" value="1"/>
</dbReference>
<dbReference type="PANTHER" id="PTHR10277:SF9">
    <property type="entry name" value="2-ISOPROPYLMALATE SYNTHASE 1, CHLOROPLASTIC-RELATED"/>
    <property type="match status" value="1"/>
</dbReference>
<dbReference type="PANTHER" id="PTHR10277">
    <property type="entry name" value="HOMOCITRATE SYNTHASE-RELATED"/>
    <property type="match status" value="1"/>
</dbReference>
<dbReference type="Pfam" id="PF22617">
    <property type="entry name" value="HCS_D2"/>
    <property type="match status" value="1"/>
</dbReference>
<dbReference type="Pfam" id="PF00682">
    <property type="entry name" value="HMGL-like"/>
    <property type="match status" value="1"/>
</dbReference>
<dbReference type="Pfam" id="PF08502">
    <property type="entry name" value="LeuA_dimer"/>
    <property type="match status" value="1"/>
</dbReference>
<dbReference type="SMART" id="SM00917">
    <property type="entry name" value="LeuA_dimer"/>
    <property type="match status" value="1"/>
</dbReference>
<dbReference type="SUPFAM" id="SSF110921">
    <property type="entry name" value="2-isopropylmalate synthase LeuA, allosteric (dimerisation) domain"/>
    <property type="match status" value="1"/>
</dbReference>
<dbReference type="SUPFAM" id="SSF51569">
    <property type="entry name" value="Aldolase"/>
    <property type="match status" value="1"/>
</dbReference>
<dbReference type="PROSITE" id="PS00815">
    <property type="entry name" value="AIPM_HOMOCIT_SYNTH_1"/>
    <property type="match status" value="1"/>
</dbReference>
<dbReference type="PROSITE" id="PS00816">
    <property type="entry name" value="AIPM_HOMOCIT_SYNTH_2"/>
    <property type="match status" value="1"/>
</dbReference>
<dbReference type="PROSITE" id="PS50991">
    <property type="entry name" value="PYR_CT"/>
    <property type="match status" value="1"/>
</dbReference>
<sequence length="512" mass="56412">MKKIQFFDTTLRDGEQTPGVNFDVKEKIQIALQLEKLGIDVIEAGFPISSPGDFECVRAIAKAIKHCSVTGLARCVEGDIDRAEEALKEAVSPQIHIFLATSDVHMEYKLKMSRAEVLASIKHHIHYARQKFDIVQFSPEDATRSDRAFLIEAVQTAIDAGATVINIPDTVGYTNPTEFGQLFQDLRREIKQFDDIIFASHCHDDLGMATANALAAIENGARRVEGTINGIGERAGNTALEEVAVALHIRKDFYQAETNIVLNQFKNSSDLISRLSGMPVPRNKAVIGGNAYAHESGIHQDGVLKNPDTYEIITPALVGVDKNSLPLGKLSGKHAFHTRMEEMGYTLSEQELKDTFKRFKQLADAKKEVTEEDLHALILGQSSESTDNFELKHLQVQYVSGGVQGAIVRIEERDGALIEDAATGSGSIEAIYNTINRLMKQDIELIDYRIQAITAGQDAQAEVHVVIKDNNETEFHGIGIDFDVLTASAKAYLQASGKSKSTTKQVDFEEVK</sequence>
<gene>
    <name evidence="1" type="primary">leuA</name>
    <name type="ordered locus">lwe2006</name>
</gene>
<proteinExistence type="inferred from homology"/>
<organism>
    <name type="scientific">Listeria welshimeri serovar 6b (strain ATCC 35897 / DSM 20650 / CCUG 15529 / CIP 8149 / NCTC 11857 / SLCC 5334 / V8)</name>
    <dbReference type="NCBI Taxonomy" id="386043"/>
    <lineage>
        <taxon>Bacteria</taxon>
        <taxon>Bacillati</taxon>
        <taxon>Bacillota</taxon>
        <taxon>Bacilli</taxon>
        <taxon>Bacillales</taxon>
        <taxon>Listeriaceae</taxon>
        <taxon>Listeria</taxon>
    </lineage>
</organism>